<sequence>MSTIEESVKAIIAEQLGVKKEEVVNNASFVDDLGADSLDTVELVMALEEEFDTEIPDEEAEKITTVQAAIDFIQASQQ</sequence>
<organism>
    <name type="scientific">Sodalis glossinidius (strain morsitans)</name>
    <dbReference type="NCBI Taxonomy" id="343509"/>
    <lineage>
        <taxon>Bacteria</taxon>
        <taxon>Pseudomonadati</taxon>
        <taxon>Pseudomonadota</taxon>
        <taxon>Gammaproteobacteria</taxon>
        <taxon>Enterobacterales</taxon>
        <taxon>Bruguierivoracaceae</taxon>
        <taxon>Sodalis</taxon>
    </lineage>
</organism>
<protein>
    <recommendedName>
        <fullName evidence="1">Acyl carrier protein</fullName>
        <shortName evidence="1">ACP</shortName>
    </recommendedName>
</protein>
<feature type="chain" id="PRO_1000066695" description="Acyl carrier protein">
    <location>
        <begin position="1"/>
        <end position="78"/>
    </location>
</feature>
<feature type="domain" description="Carrier" evidence="2">
    <location>
        <begin position="2"/>
        <end position="77"/>
    </location>
</feature>
<feature type="modified residue" description="O-(pantetheine 4'-phosphoryl)serine" evidence="2">
    <location>
        <position position="37"/>
    </location>
</feature>
<keyword id="KW-0963">Cytoplasm</keyword>
<keyword id="KW-0275">Fatty acid biosynthesis</keyword>
<keyword id="KW-0276">Fatty acid metabolism</keyword>
<keyword id="KW-0444">Lipid biosynthesis</keyword>
<keyword id="KW-0443">Lipid metabolism</keyword>
<keyword id="KW-0596">Phosphopantetheine</keyword>
<keyword id="KW-0597">Phosphoprotein</keyword>
<reference key="1">
    <citation type="journal article" date="2006" name="Genome Res.">
        <title>Massive genome erosion and functional adaptations provide insights into the symbiotic lifestyle of Sodalis glossinidius in the tsetse host.</title>
        <authorList>
            <person name="Toh H."/>
            <person name="Weiss B.L."/>
            <person name="Perkin S.A.H."/>
            <person name="Yamashita A."/>
            <person name="Oshima K."/>
            <person name="Hattori M."/>
            <person name="Aksoy S."/>
        </authorList>
    </citation>
    <scope>NUCLEOTIDE SEQUENCE [LARGE SCALE GENOMIC DNA]</scope>
    <source>
        <strain>morsitans</strain>
    </source>
</reference>
<comment type="function">
    <text evidence="1">Carrier of the growing fatty acid chain in fatty acid biosynthesis.</text>
</comment>
<comment type="pathway">
    <text evidence="1">Lipid metabolism; fatty acid biosynthesis.</text>
</comment>
<comment type="subcellular location">
    <subcellularLocation>
        <location evidence="1">Cytoplasm</location>
    </subcellularLocation>
</comment>
<comment type="PTM">
    <text evidence="1">4'-phosphopantetheine is transferred from CoA to a specific serine of apo-ACP by AcpS. This modification is essential for activity because fatty acids are bound in thioester linkage to the sulfhydryl of the prosthetic group.</text>
</comment>
<comment type="similarity">
    <text evidence="1">Belongs to the acyl carrier protein (ACP) family.</text>
</comment>
<dbReference type="EMBL" id="AP008232">
    <property type="protein sequence ID" value="BAE74336.1"/>
    <property type="molecule type" value="Genomic_DNA"/>
</dbReference>
<dbReference type="RefSeq" id="WP_011410921.1">
    <property type="nucleotide sequence ID" value="NZ_LN854557.1"/>
</dbReference>
<dbReference type="SMR" id="Q2NU39"/>
<dbReference type="STRING" id="343509.SG1061"/>
<dbReference type="KEGG" id="sgl:SG1061"/>
<dbReference type="eggNOG" id="COG0236">
    <property type="taxonomic scope" value="Bacteria"/>
</dbReference>
<dbReference type="HOGENOM" id="CLU_108696_5_1_6"/>
<dbReference type="OrthoDB" id="9804551at2"/>
<dbReference type="UniPathway" id="UPA00094"/>
<dbReference type="Proteomes" id="UP000001932">
    <property type="component" value="Chromosome"/>
</dbReference>
<dbReference type="GO" id="GO:0005829">
    <property type="term" value="C:cytosol"/>
    <property type="evidence" value="ECO:0007669"/>
    <property type="project" value="TreeGrafter"/>
</dbReference>
<dbReference type="GO" id="GO:0016020">
    <property type="term" value="C:membrane"/>
    <property type="evidence" value="ECO:0007669"/>
    <property type="project" value="GOC"/>
</dbReference>
<dbReference type="GO" id="GO:0000035">
    <property type="term" value="F:acyl binding"/>
    <property type="evidence" value="ECO:0007669"/>
    <property type="project" value="TreeGrafter"/>
</dbReference>
<dbReference type="GO" id="GO:0000036">
    <property type="term" value="F:acyl carrier activity"/>
    <property type="evidence" value="ECO:0007669"/>
    <property type="project" value="UniProtKB-UniRule"/>
</dbReference>
<dbReference type="GO" id="GO:0009245">
    <property type="term" value="P:lipid A biosynthetic process"/>
    <property type="evidence" value="ECO:0007669"/>
    <property type="project" value="TreeGrafter"/>
</dbReference>
<dbReference type="FunFam" id="1.10.1200.10:FF:000001">
    <property type="entry name" value="Acyl carrier protein"/>
    <property type="match status" value="1"/>
</dbReference>
<dbReference type="Gene3D" id="1.10.1200.10">
    <property type="entry name" value="ACP-like"/>
    <property type="match status" value="1"/>
</dbReference>
<dbReference type="HAMAP" id="MF_01217">
    <property type="entry name" value="Acyl_carrier"/>
    <property type="match status" value="1"/>
</dbReference>
<dbReference type="InterPro" id="IPR003231">
    <property type="entry name" value="ACP"/>
</dbReference>
<dbReference type="InterPro" id="IPR036736">
    <property type="entry name" value="ACP-like_sf"/>
</dbReference>
<dbReference type="InterPro" id="IPR009081">
    <property type="entry name" value="PP-bd_ACP"/>
</dbReference>
<dbReference type="InterPro" id="IPR006162">
    <property type="entry name" value="Ppantetheine_attach_site"/>
</dbReference>
<dbReference type="NCBIfam" id="TIGR00517">
    <property type="entry name" value="acyl_carrier"/>
    <property type="match status" value="1"/>
</dbReference>
<dbReference type="NCBIfam" id="NF002148">
    <property type="entry name" value="PRK00982.1-2"/>
    <property type="match status" value="1"/>
</dbReference>
<dbReference type="NCBIfam" id="NF002149">
    <property type="entry name" value="PRK00982.1-3"/>
    <property type="match status" value="1"/>
</dbReference>
<dbReference type="NCBIfam" id="NF002150">
    <property type="entry name" value="PRK00982.1-4"/>
    <property type="match status" value="1"/>
</dbReference>
<dbReference type="NCBIfam" id="NF002151">
    <property type="entry name" value="PRK00982.1-5"/>
    <property type="match status" value="1"/>
</dbReference>
<dbReference type="PANTHER" id="PTHR20863">
    <property type="entry name" value="ACYL CARRIER PROTEIN"/>
    <property type="match status" value="1"/>
</dbReference>
<dbReference type="PANTHER" id="PTHR20863:SF76">
    <property type="entry name" value="CARRIER DOMAIN-CONTAINING PROTEIN"/>
    <property type="match status" value="1"/>
</dbReference>
<dbReference type="Pfam" id="PF00550">
    <property type="entry name" value="PP-binding"/>
    <property type="match status" value="1"/>
</dbReference>
<dbReference type="SUPFAM" id="SSF47336">
    <property type="entry name" value="ACP-like"/>
    <property type="match status" value="1"/>
</dbReference>
<dbReference type="PROSITE" id="PS50075">
    <property type="entry name" value="CARRIER"/>
    <property type="match status" value="1"/>
</dbReference>
<dbReference type="PROSITE" id="PS00012">
    <property type="entry name" value="PHOSPHOPANTETHEINE"/>
    <property type="match status" value="1"/>
</dbReference>
<proteinExistence type="inferred from homology"/>
<name>ACP_SODGM</name>
<accession>Q2NU39</accession>
<gene>
    <name evidence="1" type="primary">acpP</name>
    <name type="ordered locus">SG1061</name>
</gene>
<evidence type="ECO:0000255" key="1">
    <source>
        <dbReference type="HAMAP-Rule" id="MF_01217"/>
    </source>
</evidence>
<evidence type="ECO:0000255" key="2">
    <source>
        <dbReference type="PROSITE-ProRule" id="PRU00258"/>
    </source>
</evidence>